<name>RS15_NITWN</name>
<dbReference type="EMBL" id="CP000115">
    <property type="protein sequence ID" value="ABA03295.1"/>
    <property type="molecule type" value="Genomic_DNA"/>
</dbReference>
<dbReference type="RefSeq" id="WP_011313366.1">
    <property type="nucleotide sequence ID" value="NC_007406.1"/>
</dbReference>
<dbReference type="SMR" id="Q3SWP6"/>
<dbReference type="STRING" id="323098.Nwi_0027"/>
<dbReference type="KEGG" id="nwi:Nwi_0027"/>
<dbReference type="eggNOG" id="COG0184">
    <property type="taxonomic scope" value="Bacteria"/>
</dbReference>
<dbReference type="HOGENOM" id="CLU_148518_0_0_5"/>
<dbReference type="OrthoDB" id="9799262at2"/>
<dbReference type="Proteomes" id="UP000002531">
    <property type="component" value="Chromosome"/>
</dbReference>
<dbReference type="GO" id="GO:0022627">
    <property type="term" value="C:cytosolic small ribosomal subunit"/>
    <property type="evidence" value="ECO:0007669"/>
    <property type="project" value="TreeGrafter"/>
</dbReference>
<dbReference type="GO" id="GO:0019843">
    <property type="term" value="F:rRNA binding"/>
    <property type="evidence" value="ECO:0007669"/>
    <property type="project" value="UniProtKB-UniRule"/>
</dbReference>
<dbReference type="GO" id="GO:0003735">
    <property type="term" value="F:structural constituent of ribosome"/>
    <property type="evidence" value="ECO:0007669"/>
    <property type="project" value="InterPro"/>
</dbReference>
<dbReference type="GO" id="GO:0006412">
    <property type="term" value="P:translation"/>
    <property type="evidence" value="ECO:0007669"/>
    <property type="project" value="UniProtKB-UniRule"/>
</dbReference>
<dbReference type="CDD" id="cd00353">
    <property type="entry name" value="Ribosomal_S15p_S13e"/>
    <property type="match status" value="1"/>
</dbReference>
<dbReference type="FunFam" id="1.10.287.10:FF:000002">
    <property type="entry name" value="30S ribosomal protein S15"/>
    <property type="match status" value="1"/>
</dbReference>
<dbReference type="Gene3D" id="6.10.250.3130">
    <property type="match status" value="1"/>
</dbReference>
<dbReference type="Gene3D" id="1.10.287.10">
    <property type="entry name" value="S15/NS1, RNA-binding"/>
    <property type="match status" value="1"/>
</dbReference>
<dbReference type="HAMAP" id="MF_01343_B">
    <property type="entry name" value="Ribosomal_uS15_B"/>
    <property type="match status" value="1"/>
</dbReference>
<dbReference type="InterPro" id="IPR000589">
    <property type="entry name" value="Ribosomal_uS15"/>
</dbReference>
<dbReference type="InterPro" id="IPR005290">
    <property type="entry name" value="Ribosomal_uS15_bac-type"/>
</dbReference>
<dbReference type="InterPro" id="IPR009068">
    <property type="entry name" value="uS15_NS1_RNA-bd_sf"/>
</dbReference>
<dbReference type="NCBIfam" id="TIGR00952">
    <property type="entry name" value="S15_bact"/>
    <property type="match status" value="1"/>
</dbReference>
<dbReference type="PANTHER" id="PTHR23321">
    <property type="entry name" value="RIBOSOMAL PROTEIN S15, BACTERIAL AND ORGANELLAR"/>
    <property type="match status" value="1"/>
</dbReference>
<dbReference type="PANTHER" id="PTHR23321:SF26">
    <property type="entry name" value="SMALL RIBOSOMAL SUBUNIT PROTEIN US15M"/>
    <property type="match status" value="1"/>
</dbReference>
<dbReference type="Pfam" id="PF00312">
    <property type="entry name" value="Ribosomal_S15"/>
    <property type="match status" value="1"/>
</dbReference>
<dbReference type="SMART" id="SM01387">
    <property type="entry name" value="Ribosomal_S15"/>
    <property type="match status" value="1"/>
</dbReference>
<dbReference type="SUPFAM" id="SSF47060">
    <property type="entry name" value="S15/NS1 RNA-binding domain"/>
    <property type="match status" value="1"/>
</dbReference>
<dbReference type="PROSITE" id="PS00362">
    <property type="entry name" value="RIBOSOMAL_S15"/>
    <property type="match status" value="1"/>
</dbReference>
<evidence type="ECO:0000255" key="1">
    <source>
        <dbReference type="HAMAP-Rule" id="MF_01343"/>
    </source>
</evidence>
<evidence type="ECO:0000256" key="2">
    <source>
        <dbReference type="SAM" id="MobiDB-lite"/>
    </source>
</evidence>
<evidence type="ECO:0000305" key="3"/>
<sequence length="89" mass="10063">MSIAAERKAEVIKTSANKPGDTGSPEVQVAILSERIANLTAHFKIHTKDNHSRRGLLKLVSTRRSLLDYVKKKDEARYKALLEKHGIRR</sequence>
<accession>Q3SWP6</accession>
<gene>
    <name evidence="1" type="primary">rpsO</name>
    <name type="ordered locus">Nwi_0027</name>
</gene>
<feature type="chain" id="PRO_0000115490" description="Small ribosomal subunit protein uS15">
    <location>
        <begin position="1"/>
        <end position="89"/>
    </location>
</feature>
<feature type="region of interest" description="Disordered" evidence="2">
    <location>
        <begin position="1"/>
        <end position="25"/>
    </location>
</feature>
<feature type="compositionally biased region" description="Basic and acidic residues" evidence="2">
    <location>
        <begin position="1"/>
        <end position="11"/>
    </location>
</feature>
<organism>
    <name type="scientific">Nitrobacter winogradskyi (strain ATCC 25391 / DSM 10237 / CIP 104748 / NCIMB 11846 / Nb-255)</name>
    <dbReference type="NCBI Taxonomy" id="323098"/>
    <lineage>
        <taxon>Bacteria</taxon>
        <taxon>Pseudomonadati</taxon>
        <taxon>Pseudomonadota</taxon>
        <taxon>Alphaproteobacteria</taxon>
        <taxon>Hyphomicrobiales</taxon>
        <taxon>Nitrobacteraceae</taxon>
        <taxon>Nitrobacter</taxon>
    </lineage>
</organism>
<comment type="function">
    <text evidence="1">One of the primary rRNA binding proteins, it binds directly to 16S rRNA where it helps nucleate assembly of the platform of the 30S subunit by binding and bridging several RNA helices of the 16S rRNA.</text>
</comment>
<comment type="function">
    <text evidence="1">Forms an intersubunit bridge (bridge B4) with the 23S rRNA of the 50S subunit in the ribosome.</text>
</comment>
<comment type="subunit">
    <text evidence="1">Part of the 30S ribosomal subunit. Forms a bridge to the 50S subunit in the 70S ribosome, contacting the 23S rRNA.</text>
</comment>
<comment type="similarity">
    <text evidence="1">Belongs to the universal ribosomal protein uS15 family.</text>
</comment>
<keyword id="KW-1185">Reference proteome</keyword>
<keyword id="KW-0687">Ribonucleoprotein</keyword>
<keyword id="KW-0689">Ribosomal protein</keyword>
<keyword id="KW-0694">RNA-binding</keyword>
<keyword id="KW-0699">rRNA-binding</keyword>
<proteinExistence type="inferred from homology"/>
<reference key="1">
    <citation type="journal article" date="2006" name="Appl. Environ. Microbiol.">
        <title>Genome sequence of the chemolithoautotrophic nitrite-oxidizing bacterium Nitrobacter winogradskyi Nb-255.</title>
        <authorList>
            <person name="Starkenburg S.R."/>
            <person name="Chain P.S.G."/>
            <person name="Sayavedra-Soto L.A."/>
            <person name="Hauser L."/>
            <person name="Land M.L."/>
            <person name="Larimer F.W."/>
            <person name="Malfatti S.A."/>
            <person name="Klotz M.G."/>
            <person name="Bottomley P.J."/>
            <person name="Arp D.J."/>
            <person name="Hickey W.J."/>
        </authorList>
    </citation>
    <scope>NUCLEOTIDE SEQUENCE [LARGE SCALE GENOMIC DNA]</scope>
    <source>
        <strain>ATCC 25391 / DSM 10237 / CIP 104748 / NCIMB 11846 / Nb-255</strain>
    </source>
</reference>
<protein>
    <recommendedName>
        <fullName evidence="1">Small ribosomal subunit protein uS15</fullName>
    </recommendedName>
    <alternativeName>
        <fullName evidence="3">30S ribosomal protein S15</fullName>
    </alternativeName>
</protein>